<reference key="1">
    <citation type="submission" date="2008-10" db="EMBL/GenBank/DDBJ databases">
        <title>Buthus occitanus israelis scorpion toxin.</title>
        <authorList>
            <person name="Zilberberg N."/>
            <person name="Kozminsky-Atias A."/>
        </authorList>
    </citation>
    <scope>NUCLEOTIDE SEQUENCE [MRNA]</scope>
</reference>
<protein>
    <recommendedName>
        <fullName>Putative calcium channel toxin Tx758</fullName>
    </recommendedName>
</protein>
<feature type="signal peptide" evidence="4">
    <location>
        <begin position="1"/>
        <end position="18"/>
    </location>
</feature>
<feature type="propeptide" id="PRO_0000403854" evidence="1">
    <location>
        <begin position="19"/>
        <end position="27"/>
    </location>
</feature>
<feature type="peptide" id="PRO_0000403855" description="Putative calcium channel toxin Tx758">
    <location>
        <begin position="28"/>
        <end position="64"/>
    </location>
</feature>
<feature type="disulfide bond" evidence="3">
    <location>
        <begin position="29"/>
        <end position="43"/>
    </location>
</feature>
<feature type="disulfide bond" evidence="3">
    <location>
        <begin position="36"/>
        <end position="49"/>
    </location>
</feature>
<feature type="disulfide bond" evidence="3">
    <location>
        <begin position="42"/>
        <end position="58"/>
    </location>
</feature>
<comment type="function">
    <text evidence="2">May increase intracellular calcium release through the activation of nuclear inositol 1,4,5-trisphosphate receptors (ITPR) of cardiomyocytes, thereby causing an increase in the contraction frequency of these cells.</text>
</comment>
<comment type="subcellular location">
    <subcellularLocation>
        <location evidence="5">Secreted</location>
    </subcellularLocation>
</comment>
<comment type="tissue specificity">
    <text evidence="5">Expressed by the venom gland.</text>
</comment>
<comment type="domain">
    <text evidence="3">The presence of a 'disulfide through disulfide knot' structurally defines this protein as a knottin.</text>
</comment>
<comment type="similarity">
    <text evidence="5">Belongs to the scorpion calcin-like family.</text>
</comment>
<keyword id="KW-0108">Calcium channel impairing toxin</keyword>
<keyword id="KW-1015">Disulfide bond</keyword>
<keyword id="KW-0872">Ion channel impairing toxin</keyword>
<keyword id="KW-0960">Knottin</keyword>
<keyword id="KW-0632">Potassium channel impairing toxin</keyword>
<keyword id="KW-1219">Ryanodine-sensitive calcium-release channel impairing toxin</keyword>
<keyword id="KW-0964">Secreted</keyword>
<keyword id="KW-0732">Signal</keyword>
<keyword id="KW-0800">Toxin</keyword>
<organism>
    <name type="scientific">Buthus israelis</name>
    <name type="common">Israeli scorpion</name>
    <name type="synonym">Buthus occitanus israelis</name>
    <dbReference type="NCBI Taxonomy" id="2899555"/>
    <lineage>
        <taxon>Eukaryota</taxon>
        <taxon>Metazoa</taxon>
        <taxon>Ecdysozoa</taxon>
        <taxon>Arthropoda</taxon>
        <taxon>Chelicerata</taxon>
        <taxon>Arachnida</taxon>
        <taxon>Scorpiones</taxon>
        <taxon>Buthida</taxon>
        <taxon>Buthoidea</taxon>
        <taxon>Buthidae</taxon>
        <taxon>Buthus</taxon>
    </lineage>
</organism>
<evidence type="ECO:0000250" key="1"/>
<evidence type="ECO:0000250" key="2">
    <source>
        <dbReference type="UniProtKB" id="P0DM29"/>
    </source>
</evidence>
<evidence type="ECO:0000250" key="3">
    <source>
        <dbReference type="UniProtKB" id="P59868"/>
    </source>
</evidence>
<evidence type="ECO:0000255" key="4"/>
<evidence type="ECO:0000305" key="5"/>
<dbReference type="EMBL" id="FJ360811">
    <property type="protein sequence ID" value="ACJ23131.1"/>
    <property type="molecule type" value="mRNA"/>
</dbReference>
<dbReference type="SMR" id="B8XH22"/>
<dbReference type="GO" id="GO:0005576">
    <property type="term" value="C:extracellular region"/>
    <property type="evidence" value="ECO:0007669"/>
    <property type="project" value="UniProtKB-SubCell"/>
</dbReference>
<dbReference type="GO" id="GO:0005246">
    <property type="term" value="F:calcium channel regulator activity"/>
    <property type="evidence" value="ECO:0007669"/>
    <property type="project" value="UniProtKB-KW"/>
</dbReference>
<dbReference type="GO" id="GO:0015459">
    <property type="term" value="F:potassium channel regulator activity"/>
    <property type="evidence" value="ECO:0007669"/>
    <property type="project" value="UniProtKB-KW"/>
</dbReference>
<dbReference type="GO" id="GO:0090729">
    <property type="term" value="F:toxin activity"/>
    <property type="evidence" value="ECO:0007669"/>
    <property type="project" value="UniProtKB-KW"/>
</dbReference>
<name>CL758_BUTIS</name>
<sequence>MSTFVIVFLLLTAVLCHAEPALDETARGCNRLNKKCNSDGDCCRYGERCISTGVNYYCKPDFGP</sequence>
<accession>B8XH22</accession>
<proteinExistence type="inferred from homology"/>